<comment type="similarity">
    <text evidence="1">Belongs to the Smg family.</text>
</comment>
<gene>
    <name evidence="1" type="primary">smg</name>
    <name type="ordered locus">SeHA_C3708</name>
</gene>
<evidence type="ECO:0000255" key="1">
    <source>
        <dbReference type="HAMAP-Rule" id="MF_00598"/>
    </source>
</evidence>
<accession>B4TJX5</accession>
<sequence>MFDVLMYLFETYIHNEAELRVDQDRLERDLTDAGFDREDIYNALLWLEKLADYQDGLAEPMQLASDPLSMRIYTVEECERLDASCRGFLLFLEQIQVLNLETREMVIERVLALDTAEFDLEDLKWVILMVLFNIPGCENAYQQMEELLFEVNEGMLH</sequence>
<dbReference type="EMBL" id="CP001120">
    <property type="protein sequence ID" value="ACF68417.1"/>
    <property type="molecule type" value="Genomic_DNA"/>
</dbReference>
<dbReference type="RefSeq" id="WP_000460663.1">
    <property type="nucleotide sequence ID" value="NC_011083.1"/>
</dbReference>
<dbReference type="SMR" id="B4TJX5"/>
<dbReference type="KEGG" id="seh:SeHA_C3708"/>
<dbReference type="HOGENOM" id="CLU_133242_0_0_6"/>
<dbReference type="Proteomes" id="UP000001866">
    <property type="component" value="Chromosome"/>
</dbReference>
<dbReference type="HAMAP" id="MF_00598">
    <property type="entry name" value="Smg"/>
    <property type="match status" value="1"/>
</dbReference>
<dbReference type="InterPro" id="IPR007456">
    <property type="entry name" value="Smg"/>
</dbReference>
<dbReference type="NCBIfam" id="NF002897">
    <property type="entry name" value="PRK03430.1"/>
    <property type="match status" value="1"/>
</dbReference>
<dbReference type="PANTHER" id="PTHR38692">
    <property type="entry name" value="PROTEIN SMG"/>
    <property type="match status" value="1"/>
</dbReference>
<dbReference type="PANTHER" id="PTHR38692:SF1">
    <property type="entry name" value="PROTEIN SMG"/>
    <property type="match status" value="1"/>
</dbReference>
<dbReference type="Pfam" id="PF04361">
    <property type="entry name" value="DUF494"/>
    <property type="match status" value="1"/>
</dbReference>
<proteinExistence type="inferred from homology"/>
<reference key="1">
    <citation type="journal article" date="2011" name="J. Bacteriol.">
        <title>Comparative genomics of 28 Salmonella enterica isolates: evidence for CRISPR-mediated adaptive sublineage evolution.</title>
        <authorList>
            <person name="Fricke W.F."/>
            <person name="Mammel M.K."/>
            <person name="McDermott P.F."/>
            <person name="Tartera C."/>
            <person name="White D.G."/>
            <person name="Leclerc J.E."/>
            <person name="Ravel J."/>
            <person name="Cebula T.A."/>
        </authorList>
    </citation>
    <scope>NUCLEOTIDE SEQUENCE [LARGE SCALE GENOMIC DNA]</scope>
    <source>
        <strain>SL476</strain>
    </source>
</reference>
<protein>
    <recommendedName>
        <fullName evidence="1">Protein Smg</fullName>
    </recommendedName>
</protein>
<organism>
    <name type="scientific">Salmonella heidelberg (strain SL476)</name>
    <dbReference type="NCBI Taxonomy" id="454169"/>
    <lineage>
        <taxon>Bacteria</taxon>
        <taxon>Pseudomonadati</taxon>
        <taxon>Pseudomonadota</taxon>
        <taxon>Gammaproteobacteria</taxon>
        <taxon>Enterobacterales</taxon>
        <taxon>Enterobacteriaceae</taxon>
        <taxon>Salmonella</taxon>
    </lineage>
</organism>
<name>SMG_SALHS</name>
<feature type="chain" id="PRO_1000129901" description="Protein Smg">
    <location>
        <begin position="1"/>
        <end position="157"/>
    </location>
</feature>